<dbReference type="EC" id="2.7.7.23" evidence="1"/>
<dbReference type="EC" id="2.3.1.157" evidence="1"/>
<dbReference type="EMBL" id="CP001113">
    <property type="protein sequence ID" value="ACF63625.1"/>
    <property type="molecule type" value="Genomic_DNA"/>
</dbReference>
<dbReference type="RefSeq" id="WP_000934851.1">
    <property type="nucleotide sequence ID" value="NZ_CCMR01000001.1"/>
</dbReference>
<dbReference type="SMR" id="B4SYC8"/>
<dbReference type="KEGG" id="see:SNSL254_A4143"/>
<dbReference type="HOGENOM" id="CLU_029499_15_2_6"/>
<dbReference type="UniPathway" id="UPA00113">
    <property type="reaction ID" value="UER00532"/>
</dbReference>
<dbReference type="UniPathway" id="UPA00113">
    <property type="reaction ID" value="UER00533"/>
</dbReference>
<dbReference type="UniPathway" id="UPA00973"/>
<dbReference type="Proteomes" id="UP000008824">
    <property type="component" value="Chromosome"/>
</dbReference>
<dbReference type="GO" id="GO:0005737">
    <property type="term" value="C:cytoplasm"/>
    <property type="evidence" value="ECO:0007669"/>
    <property type="project" value="UniProtKB-SubCell"/>
</dbReference>
<dbReference type="GO" id="GO:0016020">
    <property type="term" value="C:membrane"/>
    <property type="evidence" value="ECO:0007669"/>
    <property type="project" value="GOC"/>
</dbReference>
<dbReference type="GO" id="GO:0019134">
    <property type="term" value="F:glucosamine-1-phosphate N-acetyltransferase activity"/>
    <property type="evidence" value="ECO:0007669"/>
    <property type="project" value="UniProtKB-UniRule"/>
</dbReference>
<dbReference type="GO" id="GO:0000287">
    <property type="term" value="F:magnesium ion binding"/>
    <property type="evidence" value="ECO:0007669"/>
    <property type="project" value="UniProtKB-UniRule"/>
</dbReference>
<dbReference type="GO" id="GO:0003977">
    <property type="term" value="F:UDP-N-acetylglucosamine diphosphorylase activity"/>
    <property type="evidence" value="ECO:0007669"/>
    <property type="project" value="UniProtKB-UniRule"/>
</dbReference>
<dbReference type="GO" id="GO:0000902">
    <property type="term" value="P:cell morphogenesis"/>
    <property type="evidence" value="ECO:0007669"/>
    <property type="project" value="UniProtKB-UniRule"/>
</dbReference>
<dbReference type="GO" id="GO:0071555">
    <property type="term" value="P:cell wall organization"/>
    <property type="evidence" value="ECO:0007669"/>
    <property type="project" value="UniProtKB-KW"/>
</dbReference>
<dbReference type="GO" id="GO:0009245">
    <property type="term" value="P:lipid A biosynthetic process"/>
    <property type="evidence" value="ECO:0007669"/>
    <property type="project" value="UniProtKB-UniRule"/>
</dbReference>
<dbReference type="GO" id="GO:0009252">
    <property type="term" value="P:peptidoglycan biosynthetic process"/>
    <property type="evidence" value="ECO:0007669"/>
    <property type="project" value="UniProtKB-UniRule"/>
</dbReference>
<dbReference type="GO" id="GO:0008360">
    <property type="term" value="P:regulation of cell shape"/>
    <property type="evidence" value="ECO:0007669"/>
    <property type="project" value="UniProtKB-KW"/>
</dbReference>
<dbReference type="GO" id="GO:0006048">
    <property type="term" value="P:UDP-N-acetylglucosamine biosynthetic process"/>
    <property type="evidence" value="ECO:0007669"/>
    <property type="project" value="UniProtKB-UniPathway"/>
</dbReference>
<dbReference type="CDD" id="cd02540">
    <property type="entry name" value="GT2_GlmU_N_bac"/>
    <property type="match status" value="1"/>
</dbReference>
<dbReference type="CDD" id="cd03353">
    <property type="entry name" value="LbH_GlmU_C"/>
    <property type="match status" value="1"/>
</dbReference>
<dbReference type="FunFam" id="2.160.10.10:FF:000011">
    <property type="entry name" value="Bifunctional protein GlmU"/>
    <property type="match status" value="1"/>
</dbReference>
<dbReference type="FunFam" id="3.90.550.10:FF:000006">
    <property type="entry name" value="Bifunctional protein GlmU"/>
    <property type="match status" value="1"/>
</dbReference>
<dbReference type="Gene3D" id="2.160.10.10">
    <property type="entry name" value="Hexapeptide repeat proteins"/>
    <property type="match status" value="1"/>
</dbReference>
<dbReference type="Gene3D" id="3.90.550.10">
    <property type="entry name" value="Spore Coat Polysaccharide Biosynthesis Protein SpsA, Chain A"/>
    <property type="match status" value="1"/>
</dbReference>
<dbReference type="HAMAP" id="MF_01631">
    <property type="entry name" value="GlmU"/>
    <property type="match status" value="1"/>
</dbReference>
<dbReference type="InterPro" id="IPR005882">
    <property type="entry name" value="Bifunctional_GlmU"/>
</dbReference>
<dbReference type="InterPro" id="IPR050065">
    <property type="entry name" value="GlmU-like"/>
</dbReference>
<dbReference type="InterPro" id="IPR038009">
    <property type="entry name" value="GlmU_C_LbH"/>
</dbReference>
<dbReference type="InterPro" id="IPR001451">
    <property type="entry name" value="Hexapep"/>
</dbReference>
<dbReference type="InterPro" id="IPR018357">
    <property type="entry name" value="Hexapep_transf_CS"/>
</dbReference>
<dbReference type="InterPro" id="IPR025877">
    <property type="entry name" value="MobA-like_NTP_Trfase"/>
</dbReference>
<dbReference type="InterPro" id="IPR029044">
    <property type="entry name" value="Nucleotide-diphossugar_trans"/>
</dbReference>
<dbReference type="InterPro" id="IPR011004">
    <property type="entry name" value="Trimer_LpxA-like_sf"/>
</dbReference>
<dbReference type="NCBIfam" id="TIGR01173">
    <property type="entry name" value="glmU"/>
    <property type="match status" value="1"/>
</dbReference>
<dbReference type="NCBIfam" id="NF006986">
    <property type="entry name" value="PRK09451.1"/>
    <property type="match status" value="1"/>
</dbReference>
<dbReference type="PANTHER" id="PTHR43584:SF3">
    <property type="entry name" value="BIFUNCTIONAL PROTEIN GLMU"/>
    <property type="match status" value="1"/>
</dbReference>
<dbReference type="PANTHER" id="PTHR43584">
    <property type="entry name" value="NUCLEOTIDYL TRANSFERASE"/>
    <property type="match status" value="1"/>
</dbReference>
<dbReference type="Pfam" id="PF00132">
    <property type="entry name" value="Hexapep"/>
    <property type="match status" value="1"/>
</dbReference>
<dbReference type="Pfam" id="PF12804">
    <property type="entry name" value="NTP_transf_3"/>
    <property type="match status" value="1"/>
</dbReference>
<dbReference type="SUPFAM" id="SSF53448">
    <property type="entry name" value="Nucleotide-diphospho-sugar transferases"/>
    <property type="match status" value="1"/>
</dbReference>
<dbReference type="SUPFAM" id="SSF51161">
    <property type="entry name" value="Trimeric LpxA-like enzymes"/>
    <property type="match status" value="1"/>
</dbReference>
<dbReference type="PROSITE" id="PS00101">
    <property type="entry name" value="HEXAPEP_TRANSFERASES"/>
    <property type="match status" value="1"/>
</dbReference>
<keyword id="KW-0012">Acyltransferase</keyword>
<keyword id="KW-0133">Cell shape</keyword>
<keyword id="KW-0961">Cell wall biogenesis/degradation</keyword>
<keyword id="KW-0963">Cytoplasm</keyword>
<keyword id="KW-0460">Magnesium</keyword>
<keyword id="KW-0479">Metal-binding</keyword>
<keyword id="KW-0511">Multifunctional enzyme</keyword>
<keyword id="KW-0548">Nucleotidyltransferase</keyword>
<keyword id="KW-0573">Peptidoglycan synthesis</keyword>
<keyword id="KW-0677">Repeat</keyword>
<keyword id="KW-0808">Transferase</keyword>
<reference key="1">
    <citation type="journal article" date="2011" name="J. Bacteriol.">
        <title>Comparative genomics of 28 Salmonella enterica isolates: evidence for CRISPR-mediated adaptive sublineage evolution.</title>
        <authorList>
            <person name="Fricke W.F."/>
            <person name="Mammel M.K."/>
            <person name="McDermott P.F."/>
            <person name="Tartera C."/>
            <person name="White D.G."/>
            <person name="Leclerc J.E."/>
            <person name="Ravel J."/>
            <person name="Cebula T.A."/>
        </authorList>
    </citation>
    <scope>NUCLEOTIDE SEQUENCE [LARGE SCALE GENOMIC DNA]</scope>
    <source>
        <strain>SL254</strain>
    </source>
</reference>
<protein>
    <recommendedName>
        <fullName evidence="1">Bifunctional protein GlmU</fullName>
    </recommendedName>
    <domain>
        <recommendedName>
            <fullName evidence="1">UDP-N-acetylglucosamine pyrophosphorylase</fullName>
            <ecNumber evidence="1">2.7.7.23</ecNumber>
        </recommendedName>
        <alternativeName>
            <fullName evidence="1">N-acetylglucosamine-1-phosphate uridyltransferase</fullName>
        </alternativeName>
    </domain>
    <domain>
        <recommendedName>
            <fullName evidence="1">Glucosamine-1-phosphate N-acetyltransferase</fullName>
            <ecNumber evidence="1">2.3.1.157</ecNumber>
        </recommendedName>
    </domain>
</protein>
<proteinExistence type="inferred from homology"/>
<accession>B4SYC8</accession>
<feature type="chain" id="PRO_1000186485" description="Bifunctional protein GlmU">
    <location>
        <begin position="1"/>
        <end position="456"/>
    </location>
</feature>
<feature type="region of interest" description="Pyrophosphorylase" evidence="1">
    <location>
        <begin position="1"/>
        <end position="229"/>
    </location>
</feature>
<feature type="region of interest" description="Linker" evidence="1">
    <location>
        <begin position="230"/>
        <end position="250"/>
    </location>
</feature>
<feature type="region of interest" description="N-acetyltransferase" evidence="1">
    <location>
        <begin position="251"/>
        <end position="456"/>
    </location>
</feature>
<feature type="active site" description="Proton acceptor" evidence="1">
    <location>
        <position position="363"/>
    </location>
</feature>
<feature type="binding site" evidence="1">
    <location>
        <begin position="11"/>
        <end position="14"/>
    </location>
    <ligand>
        <name>UDP-N-acetyl-alpha-D-glucosamine</name>
        <dbReference type="ChEBI" id="CHEBI:57705"/>
    </ligand>
</feature>
<feature type="binding site" evidence="1">
    <location>
        <position position="25"/>
    </location>
    <ligand>
        <name>UDP-N-acetyl-alpha-D-glucosamine</name>
        <dbReference type="ChEBI" id="CHEBI:57705"/>
    </ligand>
</feature>
<feature type="binding site" evidence="1">
    <location>
        <position position="76"/>
    </location>
    <ligand>
        <name>UDP-N-acetyl-alpha-D-glucosamine</name>
        <dbReference type="ChEBI" id="CHEBI:57705"/>
    </ligand>
</feature>
<feature type="binding site" evidence="1">
    <location>
        <begin position="81"/>
        <end position="82"/>
    </location>
    <ligand>
        <name>UDP-N-acetyl-alpha-D-glucosamine</name>
        <dbReference type="ChEBI" id="CHEBI:57705"/>
    </ligand>
</feature>
<feature type="binding site" evidence="1">
    <location>
        <begin position="103"/>
        <end position="105"/>
    </location>
    <ligand>
        <name>UDP-N-acetyl-alpha-D-glucosamine</name>
        <dbReference type="ChEBI" id="CHEBI:57705"/>
    </ligand>
</feature>
<feature type="binding site" evidence="1">
    <location>
        <position position="105"/>
    </location>
    <ligand>
        <name>Mg(2+)</name>
        <dbReference type="ChEBI" id="CHEBI:18420"/>
    </ligand>
</feature>
<feature type="binding site" evidence="1">
    <location>
        <position position="140"/>
    </location>
    <ligand>
        <name>UDP-N-acetyl-alpha-D-glucosamine</name>
        <dbReference type="ChEBI" id="CHEBI:57705"/>
    </ligand>
</feature>
<feature type="binding site" evidence="1">
    <location>
        <position position="154"/>
    </location>
    <ligand>
        <name>UDP-N-acetyl-alpha-D-glucosamine</name>
        <dbReference type="ChEBI" id="CHEBI:57705"/>
    </ligand>
</feature>
<feature type="binding site" evidence="1">
    <location>
        <position position="169"/>
    </location>
    <ligand>
        <name>UDP-N-acetyl-alpha-D-glucosamine</name>
        <dbReference type="ChEBI" id="CHEBI:57705"/>
    </ligand>
</feature>
<feature type="binding site" evidence="1">
    <location>
        <position position="227"/>
    </location>
    <ligand>
        <name>Mg(2+)</name>
        <dbReference type="ChEBI" id="CHEBI:18420"/>
    </ligand>
</feature>
<feature type="binding site" evidence="1">
    <location>
        <position position="227"/>
    </location>
    <ligand>
        <name>UDP-N-acetyl-alpha-D-glucosamine</name>
        <dbReference type="ChEBI" id="CHEBI:57705"/>
    </ligand>
</feature>
<feature type="binding site" evidence="1">
    <location>
        <position position="333"/>
    </location>
    <ligand>
        <name>UDP-N-acetyl-alpha-D-glucosamine</name>
        <dbReference type="ChEBI" id="CHEBI:57705"/>
    </ligand>
</feature>
<feature type="binding site" evidence="1">
    <location>
        <position position="351"/>
    </location>
    <ligand>
        <name>UDP-N-acetyl-alpha-D-glucosamine</name>
        <dbReference type="ChEBI" id="CHEBI:57705"/>
    </ligand>
</feature>
<feature type="binding site" evidence="1">
    <location>
        <position position="366"/>
    </location>
    <ligand>
        <name>UDP-N-acetyl-alpha-D-glucosamine</name>
        <dbReference type="ChEBI" id="CHEBI:57705"/>
    </ligand>
</feature>
<feature type="binding site" evidence="1">
    <location>
        <position position="377"/>
    </location>
    <ligand>
        <name>UDP-N-acetyl-alpha-D-glucosamine</name>
        <dbReference type="ChEBI" id="CHEBI:57705"/>
    </ligand>
</feature>
<feature type="binding site" evidence="1">
    <location>
        <position position="380"/>
    </location>
    <ligand>
        <name>acetyl-CoA</name>
        <dbReference type="ChEBI" id="CHEBI:57288"/>
    </ligand>
</feature>
<feature type="binding site" evidence="1">
    <location>
        <begin position="386"/>
        <end position="387"/>
    </location>
    <ligand>
        <name>acetyl-CoA</name>
        <dbReference type="ChEBI" id="CHEBI:57288"/>
    </ligand>
</feature>
<feature type="binding site" evidence="1">
    <location>
        <position position="405"/>
    </location>
    <ligand>
        <name>acetyl-CoA</name>
        <dbReference type="ChEBI" id="CHEBI:57288"/>
    </ligand>
</feature>
<feature type="binding site" evidence="1">
    <location>
        <position position="423"/>
    </location>
    <ligand>
        <name>acetyl-CoA</name>
        <dbReference type="ChEBI" id="CHEBI:57288"/>
    </ligand>
</feature>
<feature type="binding site" evidence="1">
    <location>
        <position position="440"/>
    </location>
    <ligand>
        <name>acetyl-CoA</name>
        <dbReference type="ChEBI" id="CHEBI:57288"/>
    </ligand>
</feature>
<name>GLMU_SALNS</name>
<organism>
    <name type="scientific">Salmonella newport (strain SL254)</name>
    <dbReference type="NCBI Taxonomy" id="423368"/>
    <lineage>
        <taxon>Bacteria</taxon>
        <taxon>Pseudomonadati</taxon>
        <taxon>Pseudomonadota</taxon>
        <taxon>Gammaproteobacteria</taxon>
        <taxon>Enterobacterales</taxon>
        <taxon>Enterobacteriaceae</taxon>
        <taxon>Salmonella</taxon>
    </lineage>
</organism>
<gene>
    <name evidence="1" type="primary">glmU</name>
    <name type="ordered locus">SNSL254_A4143</name>
</gene>
<evidence type="ECO:0000255" key="1">
    <source>
        <dbReference type="HAMAP-Rule" id="MF_01631"/>
    </source>
</evidence>
<sequence length="456" mass="49180">MLNSAMSVVILAAGKGTRMYSDIPKVLHTLAGKPMVQHVIDAATKLGAAQVHLVYGHGGELLKQTLKDDKLNWVLQAEQLGTGHAMQQAAPFFSDDEDILMLYGDVPLISVETLQRLRDAKPQGGIGLLTVKLDDPSGYGRITRENGKVTGIVEHKDATDEQRQIQEINTGILIANGADLKRWLSKLTNNNAQGEYYITDIIALAYQEGREIAAVHPARISETDGVNNRLQLSRLERIYQAEQAEKLLLSGVMLRDPARFDLRGTLHCGMDVEIDANVIIEGYVTLGHRVKIGAGCIIKNSVIGDDCEISPYSVVEDAHLEAACTIGPFARLRPGAELLAGAHVGNFVEMKKARLGKGSKAGHLTYLGDAEIGDNVNIGAGTITCNYDGANKFKTVIGDDVFVGSDTQLVAPVTVGKGATIAAGTTVTRNVADNELVLSRVPQVHKQGWQRPVKKK</sequence>
<comment type="function">
    <text evidence="1">Catalyzes the last two sequential reactions in the de novo biosynthetic pathway for UDP-N-acetylglucosamine (UDP-GlcNAc). The C-terminal domain catalyzes the transfer of acetyl group from acetyl coenzyme A to glucosamine-1-phosphate (GlcN-1-P) to produce N-acetylglucosamine-1-phosphate (GlcNAc-1-P), which is converted into UDP-GlcNAc by the transfer of uridine 5-monophosphate (from uridine 5-triphosphate), a reaction catalyzed by the N-terminal domain.</text>
</comment>
<comment type="catalytic activity">
    <reaction evidence="1">
        <text>alpha-D-glucosamine 1-phosphate + acetyl-CoA = N-acetyl-alpha-D-glucosamine 1-phosphate + CoA + H(+)</text>
        <dbReference type="Rhea" id="RHEA:13725"/>
        <dbReference type="ChEBI" id="CHEBI:15378"/>
        <dbReference type="ChEBI" id="CHEBI:57287"/>
        <dbReference type="ChEBI" id="CHEBI:57288"/>
        <dbReference type="ChEBI" id="CHEBI:57776"/>
        <dbReference type="ChEBI" id="CHEBI:58516"/>
        <dbReference type="EC" id="2.3.1.157"/>
    </reaction>
</comment>
<comment type="catalytic activity">
    <reaction evidence="1">
        <text>N-acetyl-alpha-D-glucosamine 1-phosphate + UTP + H(+) = UDP-N-acetyl-alpha-D-glucosamine + diphosphate</text>
        <dbReference type="Rhea" id="RHEA:13509"/>
        <dbReference type="ChEBI" id="CHEBI:15378"/>
        <dbReference type="ChEBI" id="CHEBI:33019"/>
        <dbReference type="ChEBI" id="CHEBI:46398"/>
        <dbReference type="ChEBI" id="CHEBI:57705"/>
        <dbReference type="ChEBI" id="CHEBI:57776"/>
        <dbReference type="EC" id="2.7.7.23"/>
    </reaction>
</comment>
<comment type="cofactor">
    <cofactor evidence="1">
        <name>Mg(2+)</name>
        <dbReference type="ChEBI" id="CHEBI:18420"/>
    </cofactor>
    <text evidence="1">Binds 1 Mg(2+) ion per subunit.</text>
</comment>
<comment type="pathway">
    <text evidence="1">Nucleotide-sugar biosynthesis; UDP-N-acetyl-alpha-D-glucosamine biosynthesis; N-acetyl-alpha-D-glucosamine 1-phosphate from alpha-D-glucosamine 6-phosphate (route II): step 2/2.</text>
</comment>
<comment type="pathway">
    <text evidence="1">Nucleotide-sugar biosynthesis; UDP-N-acetyl-alpha-D-glucosamine biosynthesis; UDP-N-acetyl-alpha-D-glucosamine from N-acetyl-alpha-D-glucosamine 1-phosphate: step 1/1.</text>
</comment>
<comment type="pathway">
    <text evidence="1">Bacterial outer membrane biogenesis; LPS lipid A biosynthesis.</text>
</comment>
<comment type="subunit">
    <text evidence="1">Homotrimer.</text>
</comment>
<comment type="subcellular location">
    <subcellularLocation>
        <location evidence="1">Cytoplasm</location>
    </subcellularLocation>
</comment>
<comment type="similarity">
    <text evidence="1">In the N-terminal section; belongs to the N-acetylglucosamine-1-phosphate uridyltransferase family.</text>
</comment>
<comment type="similarity">
    <text evidence="1">In the C-terminal section; belongs to the transferase hexapeptide repeat family.</text>
</comment>